<organism>
    <name type="scientific">African swine fever virus (isolate Tick/South Africa/Pretoriuskop Pr4/1996)</name>
    <name type="common">ASFV</name>
    <dbReference type="NCBI Taxonomy" id="561443"/>
    <lineage>
        <taxon>Viruses</taxon>
        <taxon>Varidnaviria</taxon>
        <taxon>Bamfordvirae</taxon>
        <taxon>Nucleocytoviricota</taxon>
        <taxon>Pokkesviricetes</taxon>
        <taxon>Asfuvirales</taxon>
        <taxon>Asfarviridae</taxon>
        <taxon>Asfivirus</taxon>
        <taxon>African swine fever virus</taxon>
    </lineage>
</organism>
<accession>P0C983</accession>
<name>DPOLX_ASFP4</name>
<evidence type="ECO:0000250" key="1"/>
<evidence type="ECO:0000250" key="2">
    <source>
        <dbReference type="UniProtKB" id="P42494"/>
    </source>
</evidence>
<evidence type="ECO:0000305" key="3"/>
<dbReference type="EC" id="2.7.7.7" evidence="2"/>
<dbReference type="EMBL" id="AY261363">
    <property type="status" value="NOT_ANNOTATED_CDS"/>
    <property type="molecule type" value="Genomic_DNA"/>
</dbReference>
<dbReference type="SMR" id="P0C983"/>
<dbReference type="Proteomes" id="UP000000859">
    <property type="component" value="Segment"/>
</dbReference>
<dbReference type="GO" id="GO:0044423">
    <property type="term" value="C:virion component"/>
    <property type="evidence" value="ECO:0007669"/>
    <property type="project" value="UniProtKB-KW"/>
</dbReference>
<dbReference type="GO" id="GO:0003677">
    <property type="term" value="F:DNA binding"/>
    <property type="evidence" value="ECO:0007669"/>
    <property type="project" value="UniProtKB-KW"/>
</dbReference>
<dbReference type="GO" id="GO:0003887">
    <property type="term" value="F:DNA-directed DNA polymerase activity"/>
    <property type="evidence" value="ECO:0007669"/>
    <property type="project" value="UniProtKB-KW"/>
</dbReference>
<dbReference type="GO" id="GO:0046872">
    <property type="term" value="F:metal ion binding"/>
    <property type="evidence" value="ECO:0007669"/>
    <property type="project" value="UniProtKB-KW"/>
</dbReference>
<dbReference type="GO" id="GO:0006303">
    <property type="term" value="P:double-strand break repair via nonhomologous end joining"/>
    <property type="evidence" value="ECO:0007669"/>
    <property type="project" value="TreeGrafter"/>
</dbReference>
<dbReference type="Gene3D" id="3.30.460.10">
    <property type="entry name" value="Beta Polymerase, domain 2"/>
    <property type="match status" value="1"/>
</dbReference>
<dbReference type="Gene3D" id="3.30.210.10">
    <property type="entry name" value="DNA polymerase, thumb domain"/>
    <property type="match status" value="1"/>
</dbReference>
<dbReference type="InterPro" id="IPR019843">
    <property type="entry name" value="DNA_pol-X_BS"/>
</dbReference>
<dbReference type="InterPro" id="IPR037160">
    <property type="entry name" value="DNA_Pol_thumb_sf"/>
</dbReference>
<dbReference type="InterPro" id="IPR022312">
    <property type="entry name" value="DNA_pol_X"/>
</dbReference>
<dbReference type="InterPro" id="IPR043519">
    <property type="entry name" value="NT_sf"/>
</dbReference>
<dbReference type="InterPro" id="IPR029398">
    <property type="entry name" value="PolB_thumb"/>
</dbReference>
<dbReference type="PANTHER" id="PTHR11276:SF28">
    <property type="entry name" value="DNA POLYMERASE LAMBDA"/>
    <property type="match status" value="1"/>
</dbReference>
<dbReference type="PANTHER" id="PTHR11276">
    <property type="entry name" value="DNA POLYMERASE TYPE-X FAMILY MEMBER"/>
    <property type="match status" value="1"/>
</dbReference>
<dbReference type="Pfam" id="PF14791">
    <property type="entry name" value="DNA_pol_B_thumb"/>
    <property type="match status" value="1"/>
</dbReference>
<dbReference type="SUPFAM" id="SSF81301">
    <property type="entry name" value="Nucleotidyltransferase"/>
    <property type="match status" value="1"/>
</dbReference>
<dbReference type="PROSITE" id="PS00522">
    <property type="entry name" value="DNA_POLYMERASE_X"/>
    <property type="match status" value="1"/>
</dbReference>
<protein>
    <recommendedName>
        <fullName>Repair DNA polymerase X</fullName>
        <shortName>Pol X</shortName>
        <ecNumber evidence="2">2.7.7.7</ecNumber>
    </recommendedName>
    <alternativeName>
        <fullName>AsfvPolX</fullName>
    </alternativeName>
</protein>
<organismHost>
    <name type="scientific">Ornithodoros</name>
    <name type="common">relapsing fever ticks</name>
    <dbReference type="NCBI Taxonomy" id="6937"/>
</organismHost>
<organismHost>
    <name type="scientific">Phacochoerus aethiopicus</name>
    <name type="common">Warthog</name>
    <dbReference type="NCBI Taxonomy" id="85517"/>
</organismHost>
<organismHost>
    <name type="scientific">Phacochoerus africanus</name>
    <name type="common">Warthog</name>
    <dbReference type="NCBI Taxonomy" id="41426"/>
</organismHost>
<organismHost>
    <name type="scientific">Potamochoerus larvatus</name>
    <name type="common">Bushpig</name>
    <dbReference type="NCBI Taxonomy" id="273792"/>
</organismHost>
<organismHost>
    <name type="scientific">Sus scrofa</name>
    <name type="common">Pig</name>
    <dbReference type="NCBI Taxonomy" id="9823"/>
</organismHost>
<reference key="1">
    <citation type="submission" date="2003-03" db="EMBL/GenBank/DDBJ databases">
        <title>African swine fever virus genomes.</title>
        <authorList>
            <person name="Kutish G.F."/>
            <person name="Rock D.L."/>
        </authorList>
    </citation>
    <scope>NUCLEOTIDE SEQUENCE [GENOMIC DNA]</scope>
</reference>
<gene>
    <name type="ordered locus">Pret-109</name>
</gene>
<feature type="chain" id="PRO_0000373082" description="Repair DNA polymerase X">
    <location>
        <begin position="1"/>
        <end position="174"/>
    </location>
</feature>
<feature type="region of interest" description="Involved in ssDNA binding" evidence="1">
    <location>
        <begin position="42"/>
        <end position="51"/>
    </location>
</feature>
<feature type="binding site" evidence="2">
    <location>
        <position position="49"/>
    </location>
    <ligand>
        <name>Mg(2+)</name>
        <dbReference type="ChEBI" id="CHEBI:18420"/>
    </ligand>
</feature>
<feature type="binding site" evidence="2">
    <location>
        <position position="51"/>
    </location>
    <ligand>
        <name>Mg(2+)</name>
        <dbReference type="ChEBI" id="CHEBI:18420"/>
    </ligand>
</feature>
<feature type="binding site" evidence="2">
    <location>
        <position position="100"/>
    </location>
    <ligand>
        <name>Mg(2+)</name>
        <dbReference type="ChEBI" id="CHEBI:18420"/>
    </ligand>
</feature>
<feature type="site" description="Stabilizes dGTP in a syn conformation to overcome the Watson-Crick base pairing constraint" evidence="2">
    <location>
        <position position="115"/>
    </location>
</feature>
<feature type="disulfide bond" evidence="2">
    <location>
        <begin position="81"/>
        <end position="86"/>
    </location>
</feature>
<sequence length="174" mass="20335">MLTLIQGKKIVNDLRSRLAFEYNGQLIKILSKNIIAVGSLRREEKMLNDVDLLIIVPEKKLLKHVLPNIRIKDFSFSVKVCGERKCVLFIEWKKNTYQLDLFTALAEEKPYAVLHFTGPVSYLIRIRAALKKKNYKLNQYGLFKNQTLVPLKITTEKELIKELGFTYRIPKKRL</sequence>
<comment type="function">
    <text evidence="2 3">Error-prone polymerase lacking a proofreading 3'-5' exonuclease which catalyzes the gap-filling reaction during the DNA repair process (By similarity). Specifically binds intermediates in the single-nucleotide base-excision repair process (By similarity). Also catalyzes DNA polymerization with low nucleotide-insertion fidelity (By similarity). Probably acts as a strategic DNA mutase, which gives rise to a rapid emergence of variants (By similarity). Generates mismatched G-G pairs, in that case, the polymerase first binds the deoxynucleotide followed by mismatch formation (By similarity). Together with the viral DNA ligase, fills the single nucleotide gaps generated by the AP endonuclease (Probable). Binds DNA with high affinity via the helix alphaE (By similarity).</text>
</comment>
<comment type="catalytic activity">
    <reaction evidence="2">
        <text>DNA(n) + a 2'-deoxyribonucleoside 5'-triphosphate = DNA(n+1) + diphosphate</text>
        <dbReference type="Rhea" id="RHEA:22508"/>
        <dbReference type="Rhea" id="RHEA-COMP:17339"/>
        <dbReference type="Rhea" id="RHEA-COMP:17340"/>
        <dbReference type="ChEBI" id="CHEBI:33019"/>
        <dbReference type="ChEBI" id="CHEBI:61560"/>
        <dbReference type="ChEBI" id="CHEBI:173112"/>
        <dbReference type="EC" id="2.7.7.7"/>
    </reaction>
</comment>
<comment type="cofactor">
    <cofactor evidence="2">
        <name>Mg(2+)</name>
        <dbReference type="ChEBI" id="CHEBI:18420"/>
    </cofactor>
    <text>In the presence of magnesium, pol X shows a strong preference for the ssDNA gaps having one and two nucleotides.</text>
</comment>
<comment type="subcellular location">
    <subcellularLocation>
        <location evidence="2">Virion</location>
    </subcellularLocation>
    <text evidence="2">Found in association with viral nucleoid.</text>
</comment>
<comment type="domain">
    <text evidence="2">Small DNA polymerase formed from only a palm and a C-terminal subdomain (By similarity). The total DNA-binding site of pol X is composed of two DNA-binding subsites (By similarity).</text>
</comment>
<comment type="miscellaneous">
    <text evidence="3">Consistent with its intracellular location, ASFV encodes its own replicative DNA polymerase and three base excision repair enzymes: a class II AP endonuclease, the repair polymerase Pol X, and an ATP-dependent DNA ligase.</text>
</comment>
<comment type="similarity">
    <text evidence="3">Belongs to the DNA polymerase type-X family.</text>
</comment>
<proteinExistence type="inferred from homology"/>
<keyword id="KW-1015">Disulfide bond</keyword>
<keyword id="KW-0227">DNA damage</keyword>
<keyword id="KW-0234">DNA repair</keyword>
<keyword id="KW-0238">DNA-binding</keyword>
<keyword id="KW-0239">DNA-directed DNA polymerase</keyword>
<keyword id="KW-0460">Magnesium</keyword>
<keyword id="KW-0479">Metal-binding</keyword>
<keyword id="KW-0548">Nucleotidyltransferase</keyword>
<keyword id="KW-0808">Transferase</keyword>
<keyword id="KW-0946">Virion</keyword>